<gene>
    <name evidence="1" type="primary">psd</name>
    <name type="ordered locus">RHA1_ro02159</name>
</gene>
<evidence type="ECO:0000255" key="1">
    <source>
        <dbReference type="HAMAP-Rule" id="MF_00664"/>
    </source>
</evidence>
<evidence type="ECO:0000305" key="2"/>
<accession>Q0SES0</accession>
<feature type="chain" id="PRO_0000262255" description="Phosphatidylserine decarboxylase beta chain" evidence="1">
    <location>
        <begin position="1"/>
        <end position="205"/>
    </location>
</feature>
<feature type="chain" id="PRO_0000262256" description="Phosphatidylserine decarboxylase alpha chain" evidence="1">
    <location>
        <begin position="206"/>
        <end position="237"/>
    </location>
</feature>
<feature type="active site" description="Schiff-base intermediate with substrate; via pyruvic acid" evidence="1">
    <location>
        <position position="206"/>
    </location>
</feature>
<feature type="site" description="Cleavage (non-hydrolytic); by autocatalysis" evidence="1">
    <location>
        <begin position="205"/>
        <end position="206"/>
    </location>
</feature>
<feature type="modified residue" description="Pyruvic acid (Ser); by autocatalysis" evidence="1">
    <location>
        <position position="206"/>
    </location>
</feature>
<protein>
    <recommendedName>
        <fullName evidence="1">Phosphatidylserine decarboxylase proenzyme</fullName>
        <ecNumber evidence="1">4.1.1.65</ecNumber>
    </recommendedName>
    <component>
        <recommendedName>
            <fullName evidence="1">Phosphatidylserine decarboxylase alpha chain</fullName>
        </recommendedName>
    </component>
    <component>
        <recommendedName>
            <fullName evidence="1">Phosphatidylserine decarboxylase beta chain</fullName>
        </recommendedName>
    </component>
</protein>
<name>PSD_RHOJR</name>
<keyword id="KW-1003">Cell membrane</keyword>
<keyword id="KW-0210">Decarboxylase</keyword>
<keyword id="KW-0444">Lipid biosynthesis</keyword>
<keyword id="KW-0443">Lipid metabolism</keyword>
<keyword id="KW-0456">Lyase</keyword>
<keyword id="KW-0472">Membrane</keyword>
<keyword id="KW-0594">Phospholipid biosynthesis</keyword>
<keyword id="KW-1208">Phospholipid metabolism</keyword>
<keyword id="KW-0670">Pyruvate</keyword>
<keyword id="KW-0865">Zymogen</keyword>
<organism>
    <name type="scientific">Rhodococcus jostii (strain RHA1)</name>
    <dbReference type="NCBI Taxonomy" id="101510"/>
    <lineage>
        <taxon>Bacteria</taxon>
        <taxon>Bacillati</taxon>
        <taxon>Actinomycetota</taxon>
        <taxon>Actinomycetes</taxon>
        <taxon>Mycobacteriales</taxon>
        <taxon>Nocardiaceae</taxon>
        <taxon>Rhodococcus</taxon>
    </lineage>
</organism>
<sequence>MARKPTPPGTQQPTSVGHILDLVRGAVPPLHPAGLPFVLAPLGVAVLGRKRKWVRRGALTSAAACAAFFRHPHRVPPNRVGVVVAPADGEVALVDSAVPPAELDMGTEPLPRVSIFLSVLDVHVQRSPVGGEVTKVVHRPGQFLSADLADASEVNERNSMLLHTPEGHDVAVVQIAGLLARRIVCDAKVGDTLPIGDTYGLIRFGSRVDTYFPAGTTLLAERGQRTIGAETVIAQLP</sequence>
<reference key="1">
    <citation type="journal article" date="2006" name="Proc. Natl. Acad. Sci. U.S.A.">
        <title>The complete genome of Rhodococcus sp. RHA1 provides insights into a catabolic powerhouse.</title>
        <authorList>
            <person name="McLeod M.P."/>
            <person name="Warren R.L."/>
            <person name="Hsiao W.W.L."/>
            <person name="Araki N."/>
            <person name="Myhre M."/>
            <person name="Fernandes C."/>
            <person name="Miyazawa D."/>
            <person name="Wong W."/>
            <person name="Lillquist A.L."/>
            <person name="Wang D."/>
            <person name="Dosanjh M."/>
            <person name="Hara H."/>
            <person name="Petrescu A."/>
            <person name="Morin R.D."/>
            <person name="Yang G."/>
            <person name="Stott J.M."/>
            <person name="Schein J.E."/>
            <person name="Shin H."/>
            <person name="Smailus D."/>
            <person name="Siddiqui A.S."/>
            <person name="Marra M.A."/>
            <person name="Jones S.J.M."/>
            <person name="Holt R."/>
            <person name="Brinkman F.S.L."/>
            <person name="Miyauchi K."/>
            <person name="Fukuda M."/>
            <person name="Davies J.E."/>
            <person name="Mohn W.W."/>
            <person name="Eltis L.D."/>
        </authorList>
    </citation>
    <scope>NUCLEOTIDE SEQUENCE [LARGE SCALE GENOMIC DNA]</scope>
    <source>
        <strain>RHA1</strain>
    </source>
</reference>
<proteinExistence type="inferred from homology"/>
<dbReference type="EC" id="4.1.1.65" evidence="1"/>
<dbReference type="EMBL" id="CP000431">
    <property type="protein sequence ID" value="ABG93966.1"/>
    <property type="status" value="ALT_INIT"/>
    <property type="molecule type" value="Genomic_DNA"/>
</dbReference>
<dbReference type="RefSeq" id="WP_050787281.1">
    <property type="nucleotide sequence ID" value="NC_008268.1"/>
</dbReference>
<dbReference type="KEGG" id="rha:RHA1_ro02159"/>
<dbReference type="PATRIC" id="fig|101510.16.peg.2185"/>
<dbReference type="eggNOG" id="COG0688">
    <property type="taxonomic scope" value="Bacteria"/>
</dbReference>
<dbReference type="HOGENOM" id="CLU_072492_0_0_11"/>
<dbReference type="OrthoDB" id="9790893at2"/>
<dbReference type="UniPathway" id="UPA00558">
    <property type="reaction ID" value="UER00616"/>
</dbReference>
<dbReference type="Proteomes" id="UP000008710">
    <property type="component" value="Chromosome"/>
</dbReference>
<dbReference type="GO" id="GO:0005886">
    <property type="term" value="C:plasma membrane"/>
    <property type="evidence" value="ECO:0007669"/>
    <property type="project" value="UniProtKB-SubCell"/>
</dbReference>
<dbReference type="GO" id="GO:0004609">
    <property type="term" value="F:phosphatidylserine decarboxylase activity"/>
    <property type="evidence" value="ECO:0007669"/>
    <property type="project" value="UniProtKB-UniRule"/>
</dbReference>
<dbReference type="GO" id="GO:0006646">
    <property type="term" value="P:phosphatidylethanolamine biosynthetic process"/>
    <property type="evidence" value="ECO:0007669"/>
    <property type="project" value="UniProtKB-UniRule"/>
</dbReference>
<dbReference type="HAMAP" id="MF_00664">
    <property type="entry name" value="PS_decarb_PSD_A"/>
    <property type="match status" value="1"/>
</dbReference>
<dbReference type="InterPro" id="IPR003817">
    <property type="entry name" value="PS_Dcarbxylase"/>
</dbReference>
<dbReference type="InterPro" id="IPR033175">
    <property type="entry name" value="PSD-A"/>
</dbReference>
<dbReference type="NCBIfam" id="NF003679">
    <property type="entry name" value="PRK05305.1-3"/>
    <property type="match status" value="1"/>
</dbReference>
<dbReference type="PANTHER" id="PTHR35809">
    <property type="entry name" value="ARCHAETIDYLSERINE DECARBOXYLASE PROENZYME-RELATED"/>
    <property type="match status" value="1"/>
</dbReference>
<dbReference type="PANTHER" id="PTHR35809:SF1">
    <property type="entry name" value="ARCHAETIDYLSERINE DECARBOXYLASE PROENZYME-RELATED"/>
    <property type="match status" value="1"/>
</dbReference>
<dbReference type="Pfam" id="PF02666">
    <property type="entry name" value="PS_Dcarbxylase"/>
    <property type="match status" value="1"/>
</dbReference>
<comment type="function">
    <text evidence="1">Catalyzes the formation of phosphatidylethanolamine (PtdEtn) from phosphatidylserine (PtdSer).</text>
</comment>
<comment type="catalytic activity">
    <reaction evidence="1">
        <text>a 1,2-diacyl-sn-glycero-3-phospho-L-serine + H(+) = a 1,2-diacyl-sn-glycero-3-phosphoethanolamine + CO2</text>
        <dbReference type="Rhea" id="RHEA:20828"/>
        <dbReference type="ChEBI" id="CHEBI:15378"/>
        <dbReference type="ChEBI" id="CHEBI:16526"/>
        <dbReference type="ChEBI" id="CHEBI:57262"/>
        <dbReference type="ChEBI" id="CHEBI:64612"/>
        <dbReference type="EC" id="4.1.1.65"/>
    </reaction>
</comment>
<comment type="cofactor">
    <cofactor evidence="1">
        <name>pyruvate</name>
        <dbReference type="ChEBI" id="CHEBI:15361"/>
    </cofactor>
    <text evidence="1">Binds 1 pyruvoyl group covalently per subunit.</text>
</comment>
<comment type="pathway">
    <text evidence="1">Phospholipid metabolism; phosphatidylethanolamine biosynthesis; phosphatidylethanolamine from CDP-diacylglycerol: step 2/2.</text>
</comment>
<comment type="subunit">
    <text evidence="1">Heterodimer of a large membrane-associated beta subunit and a small pyruvoyl-containing alpha subunit.</text>
</comment>
<comment type="subcellular location">
    <subcellularLocation>
        <location evidence="1">Cell membrane</location>
        <topology evidence="1">Peripheral membrane protein</topology>
    </subcellularLocation>
</comment>
<comment type="PTM">
    <text evidence="1">Is synthesized initially as an inactive proenzyme. Formation of the active enzyme involves a self-maturation process in which the active site pyruvoyl group is generated from an internal serine residue via an autocatalytic post-translational modification. Two non-identical subunits are generated from the proenzyme in this reaction, and the pyruvate is formed at the N-terminus of the alpha chain, which is derived from the carboxyl end of the proenzyme. The post-translation cleavage follows an unusual pathway, termed non-hydrolytic serinolysis, in which the side chain hydroxyl group of the serine supplies its oxygen atom to form the C-terminus of the beta chain, while the remainder of the serine residue undergoes an oxidative deamination to produce ammonia and the pyruvoyl prosthetic group on the alpha chain.</text>
</comment>
<comment type="similarity">
    <text evidence="1">Belongs to the phosphatidylserine decarboxylase family. PSD-A subfamily.</text>
</comment>
<comment type="sequence caution" evidence="2">
    <conflict type="erroneous initiation">
        <sequence resource="EMBL-CDS" id="ABG93966"/>
    </conflict>
</comment>